<accession>A6LWJ0</accession>
<sequence>MKQKLLVIGGPTAVGKTDLSIKLAKNLNGEIISADSMQIYKYMDIGSAKVTKDEMNGIKHYLIDAIEPDTPFSVADFKQLGEEALEKIICNGKFPIISGGTGLYINSLTCNMTFTEAEKDESYREYLETLALEKGNEYIHEMLKDVDPISYKEIHANNRKRVIRALEVFKLTNKPFSSYNVGLDFYNSEYDVYYYVLTMNREKLYDRINKRVDLMMEKGLLNECIRLKEMGYNSDIQSMQGIGYKEILYYLEGKITLEKAIDMIKQGSRNYAKRQLTWFRRDKRCIFLDKDIMSDDEILDKVINDIIKN</sequence>
<proteinExistence type="inferred from homology"/>
<protein>
    <recommendedName>
        <fullName evidence="1">tRNA dimethylallyltransferase</fullName>
        <ecNumber evidence="1">2.5.1.75</ecNumber>
    </recommendedName>
    <alternativeName>
        <fullName evidence="1">Dimethylallyl diphosphate:tRNA dimethylallyltransferase</fullName>
        <shortName evidence="1">DMAPP:tRNA dimethylallyltransferase</shortName>
        <shortName evidence="1">DMATase</shortName>
    </alternativeName>
    <alternativeName>
        <fullName evidence="1">Isopentenyl-diphosphate:tRNA isopentenyltransferase</fullName>
        <shortName evidence="1">IPP transferase</shortName>
        <shortName evidence="1">IPPT</shortName>
        <shortName evidence="1">IPTase</shortName>
    </alternativeName>
</protein>
<evidence type="ECO:0000255" key="1">
    <source>
        <dbReference type="HAMAP-Rule" id="MF_00185"/>
    </source>
</evidence>
<organism>
    <name type="scientific">Clostridium beijerinckii (strain ATCC 51743 / NCIMB 8052)</name>
    <name type="common">Clostridium acetobutylicum</name>
    <dbReference type="NCBI Taxonomy" id="290402"/>
    <lineage>
        <taxon>Bacteria</taxon>
        <taxon>Bacillati</taxon>
        <taxon>Bacillota</taxon>
        <taxon>Clostridia</taxon>
        <taxon>Eubacteriales</taxon>
        <taxon>Clostridiaceae</taxon>
        <taxon>Clostridium</taxon>
    </lineage>
</organism>
<reference key="1">
    <citation type="submission" date="2007-06" db="EMBL/GenBank/DDBJ databases">
        <title>Complete sequence of Clostridium beijerinckii NCIMB 8052.</title>
        <authorList>
            <consortium name="US DOE Joint Genome Institute"/>
            <person name="Copeland A."/>
            <person name="Lucas S."/>
            <person name="Lapidus A."/>
            <person name="Barry K."/>
            <person name="Detter J.C."/>
            <person name="Glavina del Rio T."/>
            <person name="Hammon N."/>
            <person name="Israni S."/>
            <person name="Dalin E."/>
            <person name="Tice H."/>
            <person name="Pitluck S."/>
            <person name="Sims D."/>
            <person name="Brettin T."/>
            <person name="Bruce D."/>
            <person name="Tapia R."/>
            <person name="Brainard J."/>
            <person name="Schmutz J."/>
            <person name="Larimer F."/>
            <person name="Land M."/>
            <person name="Hauser L."/>
            <person name="Kyrpides N."/>
            <person name="Mikhailova N."/>
            <person name="Bennet G."/>
            <person name="Cann I."/>
            <person name="Chen J.-S."/>
            <person name="Contreras A.L."/>
            <person name="Jones D."/>
            <person name="Kashket E."/>
            <person name="Mitchell W."/>
            <person name="Stoddard S."/>
            <person name="Schwarz W."/>
            <person name="Qureshi N."/>
            <person name="Young M."/>
            <person name="Shi Z."/>
            <person name="Ezeji T."/>
            <person name="White B."/>
            <person name="Blaschek H."/>
            <person name="Richardson P."/>
        </authorList>
    </citation>
    <scope>NUCLEOTIDE SEQUENCE [LARGE SCALE GENOMIC DNA]</scope>
    <source>
        <strain>ATCC 51743 / NCIMB 8052</strain>
    </source>
</reference>
<name>MIAA_CLOB8</name>
<feature type="chain" id="PRO_1000098654" description="tRNA dimethylallyltransferase">
    <location>
        <begin position="1"/>
        <end position="309"/>
    </location>
</feature>
<feature type="region of interest" description="Interaction with substrate tRNA" evidence="1">
    <location>
        <begin position="35"/>
        <end position="38"/>
    </location>
</feature>
<feature type="binding site" evidence="1">
    <location>
        <begin position="10"/>
        <end position="17"/>
    </location>
    <ligand>
        <name>ATP</name>
        <dbReference type="ChEBI" id="CHEBI:30616"/>
    </ligand>
</feature>
<feature type="binding site" evidence="1">
    <location>
        <begin position="12"/>
        <end position="17"/>
    </location>
    <ligand>
        <name>substrate</name>
    </ligand>
</feature>
<feature type="site" description="Interaction with substrate tRNA" evidence="1">
    <location>
        <position position="101"/>
    </location>
</feature>
<feature type="site" description="Interaction with substrate tRNA" evidence="1">
    <location>
        <position position="124"/>
    </location>
</feature>
<dbReference type="EC" id="2.5.1.75" evidence="1"/>
<dbReference type="EMBL" id="CP000721">
    <property type="protein sequence ID" value="ABR34720.1"/>
    <property type="molecule type" value="Genomic_DNA"/>
</dbReference>
<dbReference type="RefSeq" id="WP_012058775.1">
    <property type="nucleotide sequence ID" value="NC_009617.1"/>
</dbReference>
<dbReference type="SMR" id="A6LWJ0"/>
<dbReference type="KEGG" id="cbe:Cbei_2564"/>
<dbReference type="eggNOG" id="COG0324">
    <property type="taxonomic scope" value="Bacteria"/>
</dbReference>
<dbReference type="HOGENOM" id="CLU_032616_0_1_9"/>
<dbReference type="Proteomes" id="UP000000565">
    <property type="component" value="Chromosome"/>
</dbReference>
<dbReference type="GO" id="GO:0005524">
    <property type="term" value="F:ATP binding"/>
    <property type="evidence" value="ECO:0007669"/>
    <property type="project" value="UniProtKB-UniRule"/>
</dbReference>
<dbReference type="GO" id="GO:0052381">
    <property type="term" value="F:tRNA dimethylallyltransferase activity"/>
    <property type="evidence" value="ECO:0007669"/>
    <property type="project" value="UniProtKB-UniRule"/>
</dbReference>
<dbReference type="GO" id="GO:0006400">
    <property type="term" value="P:tRNA modification"/>
    <property type="evidence" value="ECO:0007669"/>
    <property type="project" value="TreeGrafter"/>
</dbReference>
<dbReference type="FunFam" id="1.10.20.140:FF:000001">
    <property type="entry name" value="tRNA dimethylallyltransferase"/>
    <property type="match status" value="1"/>
</dbReference>
<dbReference type="Gene3D" id="1.10.20.140">
    <property type="match status" value="1"/>
</dbReference>
<dbReference type="Gene3D" id="3.40.50.300">
    <property type="entry name" value="P-loop containing nucleotide triphosphate hydrolases"/>
    <property type="match status" value="1"/>
</dbReference>
<dbReference type="HAMAP" id="MF_00185">
    <property type="entry name" value="IPP_trans"/>
    <property type="match status" value="1"/>
</dbReference>
<dbReference type="InterPro" id="IPR039657">
    <property type="entry name" value="Dimethylallyltransferase"/>
</dbReference>
<dbReference type="InterPro" id="IPR018022">
    <property type="entry name" value="IPT"/>
</dbReference>
<dbReference type="InterPro" id="IPR027417">
    <property type="entry name" value="P-loop_NTPase"/>
</dbReference>
<dbReference type="NCBIfam" id="TIGR00174">
    <property type="entry name" value="miaA"/>
    <property type="match status" value="1"/>
</dbReference>
<dbReference type="PANTHER" id="PTHR11088">
    <property type="entry name" value="TRNA DIMETHYLALLYLTRANSFERASE"/>
    <property type="match status" value="1"/>
</dbReference>
<dbReference type="PANTHER" id="PTHR11088:SF60">
    <property type="entry name" value="TRNA DIMETHYLALLYLTRANSFERASE"/>
    <property type="match status" value="1"/>
</dbReference>
<dbReference type="Pfam" id="PF01715">
    <property type="entry name" value="IPPT"/>
    <property type="match status" value="1"/>
</dbReference>
<dbReference type="SUPFAM" id="SSF52540">
    <property type="entry name" value="P-loop containing nucleoside triphosphate hydrolases"/>
    <property type="match status" value="2"/>
</dbReference>
<keyword id="KW-0067">ATP-binding</keyword>
<keyword id="KW-0460">Magnesium</keyword>
<keyword id="KW-0547">Nucleotide-binding</keyword>
<keyword id="KW-0808">Transferase</keyword>
<keyword id="KW-0819">tRNA processing</keyword>
<comment type="function">
    <text evidence="1">Catalyzes the transfer of a dimethylallyl group onto the adenine at position 37 in tRNAs that read codons beginning with uridine, leading to the formation of N6-(dimethylallyl)adenosine (i(6)A).</text>
</comment>
<comment type="catalytic activity">
    <reaction evidence="1">
        <text>adenosine(37) in tRNA + dimethylallyl diphosphate = N(6)-dimethylallyladenosine(37) in tRNA + diphosphate</text>
        <dbReference type="Rhea" id="RHEA:26482"/>
        <dbReference type="Rhea" id="RHEA-COMP:10162"/>
        <dbReference type="Rhea" id="RHEA-COMP:10375"/>
        <dbReference type="ChEBI" id="CHEBI:33019"/>
        <dbReference type="ChEBI" id="CHEBI:57623"/>
        <dbReference type="ChEBI" id="CHEBI:74411"/>
        <dbReference type="ChEBI" id="CHEBI:74415"/>
        <dbReference type="EC" id="2.5.1.75"/>
    </reaction>
</comment>
<comment type="cofactor">
    <cofactor evidence="1">
        <name>Mg(2+)</name>
        <dbReference type="ChEBI" id="CHEBI:18420"/>
    </cofactor>
</comment>
<comment type="subunit">
    <text evidence="1">Monomer.</text>
</comment>
<comment type="similarity">
    <text evidence="1">Belongs to the IPP transferase family.</text>
</comment>
<gene>
    <name evidence="1" type="primary">miaA</name>
    <name type="ordered locus">Cbei_2564</name>
</gene>